<comment type="catalytic activity">
    <reaction evidence="1">
        <text>beta-D-fructose 1,6-bisphosphate + H2O = beta-D-fructose 6-phosphate + phosphate</text>
        <dbReference type="Rhea" id="RHEA:11064"/>
        <dbReference type="ChEBI" id="CHEBI:15377"/>
        <dbReference type="ChEBI" id="CHEBI:32966"/>
        <dbReference type="ChEBI" id="CHEBI:43474"/>
        <dbReference type="ChEBI" id="CHEBI:57634"/>
        <dbReference type="EC" id="3.1.3.11"/>
    </reaction>
</comment>
<comment type="cofactor">
    <cofactor evidence="1">
        <name>Mg(2+)</name>
        <dbReference type="ChEBI" id="CHEBI:18420"/>
    </cofactor>
    <text evidence="1">Binds 2 magnesium ions per subunit.</text>
</comment>
<comment type="pathway">
    <text evidence="1">Carbohydrate biosynthesis; gluconeogenesis.</text>
</comment>
<comment type="subunit">
    <text evidence="1">Homotetramer.</text>
</comment>
<comment type="subcellular location">
    <subcellularLocation>
        <location evidence="1">Cytoplasm</location>
    </subcellularLocation>
</comment>
<comment type="similarity">
    <text evidence="1">Belongs to the FBPase class 1 family.</text>
</comment>
<name>F16PA_YERPA</name>
<organism>
    <name type="scientific">Yersinia pestis bv. Antiqua (strain Antiqua)</name>
    <dbReference type="NCBI Taxonomy" id="360102"/>
    <lineage>
        <taxon>Bacteria</taxon>
        <taxon>Pseudomonadati</taxon>
        <taxon>Pseudomonadota</taxon>
        <taxon>Gammaproteobacteria</taxon>
        <taxon>Enterobacterales</taxon>
        <taxon>Yersiniaceae</taxon>
        <taxon>Yersinia</taxon>
    </lineage>
</organism>
<dbReference type="EC" id="3.1.3.11" evidence="1"/>
<dbReference type="EMBL" id="CP000308">
    <property type="protein sequence ID" value="ABG12039.1"/>
    <property type="molecule type" value="Genomic_DNA"/>
</dbReference>
<dbReference type="PIR" id="AI0427">
    <property type="entry name" value="AI0427"/>
</dbReference>
<dbReference type="RefSeq" id="WP_002216946.1">
    <property type="nucleotide sequence ID" value="NZ_CP009906.1"/>
</dbReference>
<dbReference type="SMR" id="Q1CBY3"/>
<dbReference type="GeneID" id="57975194"/>
<dbReference type="KEGG" id="ypa:YPA_0070"/>
<dbReference type="UniPathway" id="UPA00138"/>
<dbReference type="Proteomes" id="UP000001971">
    <property type="component" value="Chromosome"/>
</dbReference>
<dbReference type="GO" id="GO:0005829">
    <property type="term" value="C:cytosol"/>
    <property type="evidence" value="ECO:0007669"/>
    <property type="project" value="TreeGrafter"/>
</dbReference>
<dbReference type="GO" id="GO:0042132">
    <property type="term" value="F:fructose 1,6-bisphosphate 1-phosphatase activity"/>
    <property type="evidence" value="ECO:0007669"/>
    <property type="project" value="UniProtKB-UniRule"/>
</dbReference>
<dbReference type="GO" id="GO:0000287">
    <property type="term" value="F:magnesium ion binding"/>
    <property type="evidence" value="ECO:0007669"/>
    <property type="project" value="UniProtKB-UniRule"/>
</dbReference>
<dbReference type="GO" id="GO:0030388">
    <property type="term" value="P:fructose 1,6-bisphosphate metabolic process"/>
    <property type="evidence" value="ECO:0007669"/>
    <property type="project" value="TreeGrafter"/>
</dbReference>
<dbReference type="GO" id="GO:0006002">
    <property type="term" value="P:fructose 6-phosphate metabolic process"/>
    <property type="evidence" value="ECO:0007669"/>
    <property type="project" value="TreeGrafter"/>
</dbReference>
<dbReference type="GO" id="GO:0006000">
    <property type="term" value="P:fructose metabolic process"/>
    <property type="evidence" value="ECO:0007669"/>
    <property type="project" value="TreeGrafter"/>
</dbReference>
<dbReference type="GO" id="GO:0006094">
    <property type="term" value="P:gluconeogenesis"/>
    <property type="evidence" value="ECO:0007669"/>
    <property type="project" value="UniProtKB-UniRule"/>
</dbReference>
<dbReference type="GO" id="GO:0005986">
    <property type="term" value="P:sucrose biosynthetic process"/>
    <property type="evidence" value="ECO:0007669"/>
    <property type="project" value="TreeGrafter"/>
</dbReference>
<dbReference type="CDD" id="cd00354">
    <property type="entry name" value="FBPase"/>
    <property type="match status" value="1"/>
</dbReference>
<dbReference type="FunFam" id="3.30.540.10:FF:000002">
    <property type="entry name" value="Fructose-1,6-bisphosphatase class 1"/>
    <property type="match status" value="1"/>
</dbReference>
<dbReference type="FunFam" id="3.40.190.80:FF:000001">
    <property type="entry name" value="Fructose-1,6-bisphosphatase class 1"/>
    <property type="match status" value="1"/>
</dbReference>
<dbReference type="Gene3D" id="3.40.190.80">
    <property type="match status" value="1"/>
</dbReference>
<dbReference type="Gene3D" id="3.30.540.10">
    <property type="entry name" value="Fructose-1,6-Bisphosphatase, subunit A, domain 1"/>
    <property type="match status" value="1"/>
</dbReference>
<dbReference type="HAMAP" id="MF_01855">
    <property type="entry name" value="FBPase_class1"/>
    <property type="match status" value="1"/>
</dbReference>
<dbReference type="InterPro" id="IPR044015">
    <property type="entry name" value="FBPase_C_dom"/>
</dbReference>
<dbReference type="InterPro" id="IPR000146">
    <property type="entry name" value="FBPase_class-1"/>
</dbReference>
<dbReference type="InterPro" id="IPR033391">
    <property type="entry name" value="FBPase_N"/>
</dbReference>
<dbReference type="InterPro" id="IPR028343">
    <property type="entry name" value="FBPtase"/>
</dbReference>
<dbReference type="InterPro" id="IPR020548">
    <property type="entry name" value="Fructose_bisphosphatase_AS"/>
</dbReference>
<dbReference type="NCBIfam" id="NF006778">
    <property type="entry name" value="PRK09293.1-1"/>
    <property type="match status" value="1"/>
</dbReference>
<dbReference type="PANTHER" id="PTHR11556">
    <property type="entry name" value="FRUCTOSE-1,6-BISPHOSPHATASE-RELATED"/>
    <property type="match status" value="1"/>
</dbReference>
<dbReference type="PANTHER" id="PTHR11556:SF35">
    <property type="entry name" value="SEDOHEPTULOSE-1,7-BISPHOSPHATASE, CHLOROPLASTIC"/>
    <property type="match status" value="1"/>
</dbReference>
<dbReference type="Pfam" id="PF00316">
    <property type="entry name" value="FBPase"/>
    <property type="match status" value="1"/>
</dbReference>
<dbReference type="Pfam" id="PF18913">
    <property type="entry name" value="FBPase_C"/>
    <property type="match status" value="1"/>
</dbReference>
<dbReference type="PIRSF" id="PIRSF500210">
    <property type="entry name" value="FBPtase"/>
    <property type="match status" value="1"/>
</dbReference>
<dbReference type="PIRSF" id="PIRSF000904">
    <property type="entry name" value="FBPtase_SBPase"/>
    <property type="match status" value="1"/>
</dbReference>
<dbReference type="PRINTS" id="PR00115">
    <property type="entry name" value="F16BPHPHTASE"/>
</dbReference>
<dbReference type="SUPFAM" id="SSF56655">
    <property type="entry name" value="Carbohydrate phosphatase"/>
    <property type="match status" value="1"/>
</dbReference>
<dbReference type="PROSITE" id="PS00124">
    <property type="entry name" value="FBPASE"/>
    <property type="match status" value="1"/>
</dbReference>
<feature type="chain" id="PRO_0000364762" description="Fructose-1,6-bisphosphatase class 1">
    <location>
        <begin position="1"/>
        <end position="337"/>
    </location>
</feature>
<feature type="binding site" evidence="1">
    <location>
        <position position="89"/>
    </location>
    <ligand>
        <name>Mg(2+)</name>
        <dbReference type="ChEBI" id="CHEBI:18420"/>
        <label>1</label>
    </ligand>
</feature>
<feature type="binding site" evidence="1">
    <location>
        <position position="112"/>
    </location>
    <ligand>
        <name>Mg(2+)</name>
        <dbReference type="ChEBI" id="CHEBI:18420"/>
        <label>1</label>
    </ligand>
</feature>
<feature type="binding site" evidence="1">
    <location>
        <position position="112"/>
    </location>
    <ligand>
        <name>Mg(2+)</name>
        <dbReference type="ChEBI" id="CHEBI:18420"/>
        <label>2</label>
    </ligand>
</feature>
<feature type="binding site" evidence="1">
    <location>
        <position position="114"/>
    </location>
    <ligand>
        <name>Mg(2+)</name>
        <dbReference type="ChEBI" id="CHEBI:18420"/>
        <label>1</label>
    </ligand>
</feature>
<feature type="binding site" evidence="1">
    <location>
        <begin position="115"/>
        <end position="118"/>
    </location>
    <ligand>
        <name>substrate</name>
    </ligand>
</feature>
<feature type="binding site" evidence="1">
    <location>
        <position position="115"/>
    </location>
    <ligand>
        <name>Mg(2+)</name>
        <dbReference type="ChEBI" id="CHEBI:18420"/>
        <label>2</label>
    </ligand>
</feature>
<feature type="binding site" evidence="1">
    <location>
        <position position="208"/>
    </location>
    <ligand>
        <name>substrate</name>
    </ligand>
</feature>
<feature type="binding site" evidence="1">
    <location>
        <position position="241"/>
    </location>
    <ligand>
        <name>substrate</name>
    </ligand>
</feature>
<feature type="binding site" evidence="1">
    <location>
        <position position="271"/>
    </location>
    <ligand>
        <name>substrate</name>
    </ligand>
</feature>
<feature type="binding site" evidence="1">
    <location>
        <position position="277"/>
    </location>
    <ligand>
        <name>Mg(2+)</name>
        <dbReference type="ChEBI" id="CHEBI:18420"/>
        <label>2</label>
    </ligand>
</feature>
<accession>Q1CBY3</accession>
<reference key="1">
    <citation type="journal article" date="2006" name="J. Bacteriol.">
        <title>Complete genome sequence of Yersinia pestis strains Antiqua and Nepal516: evidence of gene reduction in an emerging pathogen.</title>
        <authorList>
            <person name="Chain P.S.G."/>
            <person name="Hu P."/>
            <person name="Malfatti S.A."/>
            <person name="Radnedge L."/>
            <person name="Larimer F."/>
            <person name="Vergez L.M."/>
            <person name="Worsham P."/>
            <person name="Chu M.C."/>
            <person name="Andersen G.L."/>
        </authorList>
    </citation>
    <scope>NUCLEOTIDE SEQUENCE [LARGE SCALE GENOMIC DNA]</scope>
    <source>
        <strain>Antiqua</strain>
    </source>
</reference>
<keyword id="KW-0119">Carbohydrate metabolism</keyword>
<keyword id="KW-0963">Cytoplasm</keyword>
<keyword id="KW-0378">Hydrolase</keyword>
<keyword id="KW-0460">Magnesium</keyword>
<keyword id="KW-0479">Metal-binding</keyword>
<gene>
    <name evidence="1" type="primary">fbp</name>
    <name type="ordered locus">YPA_0070</name>
</gene>
<protein>
    <recommendedName>
        <fullName evidence="1">Fructose-1,6-bisphosphatase class 1</fullName>
        <shortName evidence="1">FBPase class 1</shortName>
        <ecNumber evidence="1">3.1.3.11</ecNumber>
    </recommendedName>
    <alternativeName>
        <fullName evidence="1">D-fructose-1,6-bisphosphate 1-phosphohydrolase class 1</fullName>
    </alternativeName>
</protein>
<proteinExistence type="inferred from homology"/>
<sequence>MKTLGEFIVEKQLDFSHATGELTALLSAIKLGAKIIHRDINKAGLVDILGASGVSNIQGEDQMKLDLFANEKLKAALKARGEVAGIASEEEDDIVIFDGGRAENAKYVVLMDPLDGSSNIDVNVSVGTIFSIYRRITPFGTPITEEDFLQPGTKQVTAGYVVYGSSTMLVYTTGYGVHAFTYDPSLGVFCLSHEKVRYPATGCMYSINEGNYIKFPLGVKKYIKYCQEQDEATKRPYTSRYIGSLVADFHRNLLKGGIYIYPSTASHPQGKLRLLYECNPMAFLAEQAGGKATDGVNRILDIVPEKLHQRAPFFVGTKSMVEDAEGFIAKFPDEEAK</sequence>
<evidence type="ECO:0000255" key="1">
    <source>
        <dbReference type="HAMAP-Rule" id="MF_01855"/>
    </source>
</evidence>